<protein>
    <recommendedName>
        <fullName>Mitochondrial intermediate peptidase</fullName>
        <shortName>MIP</shortName>
        <ecNumber>3.4.24.59</ecNumber>
    </recommendedName>
</protein>
<name>MIPEP_MOUSE</name>
<keyword id="KW-0007">Acetylation</keyword>
<keyword id="KW-0106">Calcium</keyword>
<keyword id="KW-0170">Cobalt</keyword>
<keyword id="KW-0378">Hydrolase</keyword>
<keyword id="KW-0408">Iron</keyword>
<keyword id="KW-0460">Magnesium</keyword>
<keyword id="KW-0464">Manganese</keyword>
<keyword id="KW-0479">Metal-binding</keyword>
<keyword id="KW-0482">Metalloprotease</keyword>
<keyword id="KW-0496">Mitochondrion</keyword>
<keyword id="KW-0645">Protease</keyword>
<keyword id="KW-1185">Reference proteome</keyword>
<keyword id="KW-0809">Transit peptide</keyword>
<keyword id="KW-0862">Zinc</keyword>
<proteinExistence type="evidence at protein level"/>
<sequence length="711" mass="80852">MLLAAGARYARRLCGRGAAAALQGRTGRSCARDVSTSWSPVGAAFNVKPQSHLWNLLGERRGLFGVPELSTPEGFQVAQEEALKKTEWLVERACSTPPGPQTVLIFDELSDCLCRVADLADFVKIGHPDPAFREAAQEACRSIGTMVEKLNTNVELYQSLQRLLGDKKLMESLDAETRRVAELFMFDFEISGIHLDEEKRRRAVDLNVKILDLSNAFLMRTNFPNKIRKSLLPEHIQHHFARDGSHLIIDGLHAEASDDLVREAAYKIFLYPNADQLKCLEELLSSRDLLAKLVGYSTFSHRALQGTIAQTPETVMQFLEKLSEKLSERTRKDFKMMQGMKTKLNPQNSKLMPWDPPYYSGVIRAERYNIEPSLYCPFLSLGACMEGLNVLFNKLLGITLYAEQTFKGEVWCNDIRKLAVVHESEGLLGYIYCDFFQRANKPQQDCHFTIRGGRLKEDGSYQLPVVVLMLNLPHASRDFPTLLTPGMMENLFHEMGHAMHSMLGRTRYQHVTGTRCPTDFAEVPSILMEYFSNDYRVVSQFAKHYQTGQPLPKAMVSRLCESKKVCTAAEMQLQVFYAALDQIYHGQHPLKKSTTDILMETQEQFYGLPYVPDTAWQLRFSHLVGYGAKYYSYLMSRAVASMIWKECFLQDPFNRAAGERYRREMLAHGGGKEPMLMIQGMLQKCPSIDDFVDALVSDMNLDFETFFLDSK</sequence>
<accession>A6H611</accession>
<accession>Q2YD79</accession>
<accession>Q3UJJ3</accession>
<accession>Q80VA3</accession>
<organism>
    <name type="scientific">Mus musculus</name>
    <name type="common">Mouse</name>
    <dbReference type="NCBI Taxonomy" id="10090"/>
    <lineage>
        <taxon>Eukaryota</taxon>
        <taxon>Metazoa</taxon>
        <taxon>Chordata</taxon>
        <taxon>Craniata</taxon>
        <taxon>Vertebrata</taxon>
        <taxon>Euteleostomi</taxon>
        <taxon>Mammalia</taxon>
        <taxon>Eutheria</taxon>
        <taxon>Euarchontoglires</taxon>
        <taxon>Glires</taxon>
        <taxon>Rodentia</taxon>
        <taxon>Myomorpha</taxon>
        <taxon>Muroidea</taxon>
        <taxon>Muridae</taxon>
        <taxon>Murinae</taxon>
        <taxon>Mus</taxon>
        <taxon>Mus</taxon>
    </lineage>
</organism>
<gene>
    <name type="primary">Mipep</name>
</gene>
<evidence type="ECO:0000250" key="1"/>
<evidence type="ECO:0000250" key="2">
    <source>
        <dbReference type="UniProtKB" id="Q99797"/>
    </source>
</evidence>
<evidence type="ECO:0000255" key="3">
    <source>
        <dbReference type="PROSITE-ProRule" id="PRU10095"/>
    </source>
</evidence>
<evidence type="ECO:0000305" key="4"/>
<comment type="function">
    <text evidence="1">Cleaves proteins, imported into the mitochondrion, to their mature size.</text>
</comment>
<comment type="catalytic activity">
    <reaction>
        <text>Release of an N-terminal octapeptide as second stage of processing of some proteins imported into the mitochondrion.</text>
        <dbReference type="EC" id="3.4.24.59"/>
    </reaction>
</comment>
<comment type="cofactor">
    <cofactor evidence="1">
        <name>Zn(2+)</name>
        <dbReference type="ChEBI" id="CHEBI:29105"/>
    </cofactor>
    <text evidence="1">Binds 1 zinc ion.</text>
</comment>
<comment type="activity regulation">
    <text evidence="1">Activity is divalent cation-dependent. It is stimulated by manganese, magnesium or calcium ions and reversibly inhibited by zinc, cobalt and iron (By similarity).</text>
</comment>
<comment type="subunit">
    <text evidence="1">Monomer.</text>
</comment>
<comment type="subcellular location">
    <subcellularLocation>
        <location evidence="1">Mitochondrion matrix</location>
    </subcellularLocation>
</comment>
<comment type="similarity">
    <text evidence="4">Belongs to the peptidase M3 family.</text>
</comment>
<dbReference type="EC" id="3.4.24.59"/>
<dbReference type="EMBL" id="AK146428">
    <property type="protein sequence ID" value="BAE27162.1"/>
    <property type="molecule type" value="mRNA"/>
</dbReference>
<dbReference type="EMBL" id="BC049871">
    <property type="protein sequence ID" value="AAH49871.1"/>
    <property type="molecule type" value="mRNA"/>
</dbReference>
<dbReference type="EMBL" id="BC110358">
    <property type="protein sequence ID" value="AAI10359.1"/>
    <property type="molecule type" value="mRNA"/>
</dbReference>
<dbReference type="EMBL" id="BC145711">
    <property type="protein sequence ID" value="AAI45712.1"/>
    <property type="molecule type" value="mRNA"/>
</dbReference>
<dbReference type="CCDS" id="CCDS49517.1"/>
<dbReference type="RefSeq" id="NP_081712.2">
    <property type="nucleotide sequence ID" value="NM_027436.3"/>
</dbReference>
<dbReference type="SMR" id="A6H611"/>
<dbReference type="BioGRID" id="214082">
    <property type="interactions" value="6"/>
</dbReference>
<dbReference type="FunCoup" id="A6H611">
    <property type="interactions" value="2318"/>
</dbReference>
<dbReference type="STRING" id="10090.ENSMUSP00000069840"/>
<dbReference type="iPTMnet" id="A6H611"/>
<dbReference type="PhosphoSitePlus" id="A6H611"/>
<dbReference type="SwissPalm" id="A6H611"/>
<dbReference type="PaxDb" id="10090-ENSMUSP00000069840"/>
<dbReference type="PeptideAtlas" id="A6H611"/>
<dbReference type="ProteomicsDB" id="290253"/>
<dbReference type="Pumba" id="A6H611"/>
<dbReference type="Antibodypedia" id="22428">
    <property type="antibodies" value="400 antibodies from 27 providers"/>
</dbReference>
<dbReference type="DNASU" id="70478"/>
<dbReference type="Ensembl" id="ENSMUST00000063562.9">
    <property type="protein sequence ID" value="ENSMUSP00000069840.8"/>
    <property type="gene ID" value="ENSMUSG00000021993.11"/>
</dbReference>
<dbReference type="Ensembl" id="ENSMUST00000224635.2">
    <property type="protein sequence ID" value="ENSMUSP00000153502.2"/>
    <property type="gene ID" value="ENSMUSG00000021993.11"/>
</dbReference>
<dbReference type="GeneID" id="70478"/>
<dbReference type="KEGG" id="mmu:70478"/>
<dbReference type="AGR" id="MGI:1917728"/>
<dbReference type="CTD" id="4285"/>
<dbReference type="MGI" id="MGI:1917728">
    <property type="gene designation" value="Mipep"/>
</dbReference>
<dbReference type="VEuPathDB" id="HostDB:ENSMUSG00000021993"/>
<dbReference type="eggNOG" id="KOG2090">
    <property type="taxonomic scope" value="Eukaryota"/>
</dbReference>
<dbReference type="GeneTree" id="ENSGT00950000183171"/>
<dbReference type="HOGENOM" id="CLU_001805_0_2_1"/>
<dbReference type="InParanoid" id="A6H611"/>
<dbReference type="OMA" id="ALMFEYM"/>
<dbReference type="OrthoDB" id="17530at2759"/>
<dbReference type="PhylomeDB" id="A6H611"/>
<dbReference type="TreeFam" id="TF105715"/>
<dbReference type="BioGRID-ORCS" id="70478">
    <property type="hits" value="19 hits in 79 CRISPR screens"/>
</dbReference>
<dbReference type="ChiTaRS" id="Mipep">
    <property type="organism name" value="mouse"/>
</dbReference>
<dbReference type="PRO" id="PR:A6H611"/>
<dbReference type="Proteomes" id="UP000000589">
    <property type="component" value="Chromosome 14"/>
</dbReference>
<dbReference type="RNAct" id="A6H611">
    <property type="molecule type" value="protein"/>
</dbReference>
<dbReference type="Bgee" id="ENSMUSG00000021993">
    <property type="expression patterns" value="Expressed in seminiferous tubule of testis and 231 other cell types or tissues"/>
</dbReference>
<dbReference type="ExpressionAtlas" id="A6H611">
    <property type="expression patterns" value="baseline and differential"/>
</dbReference>
<dbReference type="GO" id="GO:0005759">
    <property type="term" value="C:mitochondrial matrix"/>
    <property type="evidence" value="ECO:0007669"/>
    <property type="project" value="UniProtKB-SubCell"/>
</dbReference>
<dbReference type="GO" id="GO:0005739">
    <property type="term" value="C:mitochondrion"/>
    <property type="evidence" value="ECO:0007005"/>
    <property type="project" value="MGI"/>
</dbReference>
<dbReference type="GO" id="GO:0046872">
    <property type="term" value="F:metal ion binding"/>
    <property type="evidence" value="ECO:0007669"/>
    <property type="project" value="UniProtKB-KW"/>
</dbReference>
<dbReference type="GO" id="GO:0004222">
    <property type="term" value="F:metalloendopeptidase activity"/>
    <property type="evidence" value="ECO:0007669"/>
    <property type="project" value="UniProtKB-EC"/>
</dbReference>
<dbReference type="GO" id="GO:0006508">
    <property type="term" value="P:proteolysis"/>
    <property type="evidence" value="ECO:0007669"/>
    <property type="project" value="UniProtKB-KW"/>
</dbReference>
<dbReference type="CDD" id="cd06457">
    <property type="entry name" value="M3A_MIP"/>
    <property type="match status" value="1"/>
</dbReference>
<dbReference type="FunFam" id="3.40.390.10:FF:000013">
    <property type="entry name" value="Mitochondrial intermediate peptidase"/>
    <property type="match status" value="1"/>
</dbReference>
<dbReference type="FunFam" id="1.10.1370.10:FF:000026">
    <property type="entry name" value="Si:ch73-1a9.4"/>
    <property type="match status" value="1"/>
</dbReference>
<dbReference type="Gene3D" id="3.40.390.10">
    <property type="entry name" value="Collagenase (Catalytic Domain)"/>
    <property type="match status" value="1"/>
</dbReference>
<dbReference type="Gene3D" id="1.10.1370.10">
    <property type="entry name" value="Neurolysin, domain 3"/>
    <property type="match status" value="1"/>
</dbReference>
<dbReference type="InterPro" id="IPR033851">
    <property type="entry name" value="M3A_MIP"/>
</dbReference>
<dbReference type="InterPro" id="IPR024079">
    <property type="entry name" value="MetalloPept_cat_dom_sf"/>
</dbReference>
<dbReference type="InterPro" id="IPR024077">
    <property type="entry name" value="Neurolysin/TOP_dom2"/>
</dbReference>
<dbReference type="InterPro" id="IPR045090">
    <property type="entry name" value="Pept_M3A_M3B"/>
</dbReference>
<dbReference type="InterPro" id="IPR001567">
    <property type="entry name" value="Pept_M3A_M3B_dom"/>
</dbReference>
<dbReference type="PANTHER" id="PTHR11804:SF79">
    <property type="entry name" value="MITOCHONDRIAL INTERMEDIATE PEPTIDASE"/>
    <property type="match status" value="1"/>
</dbReference>
<dbReference type="PANTHER" id="PTHR11804">
    <property type="entry name" value="PROTEASE M3 THIMET OLIGOPEPTIDASE-RELATED"/>
    <property type="match status" value="1"/>
</dbReference>
<dbReference type="Pfam" id="PF01432">
    <property type="entry name" value="Peptidase_M3"/>
    <property type="match status" value="1"/>
</dbReference>
<dbReference type="SUPFAM" id="SSF55486">
    <property type="entry name" value="Metalloproteases ('zincins'), catalytic domain"/>
    <property type="match status" value="1"/>
</dbReference>
<dbReference type="PROSITE" id="PS00142">
    <property type="entry name" value="ZINC_PROTEASE"/>
    <property type="match status" value="1"/>
</dbReference>
<reference key="1">
    <citation type="journal article" date="2005" name="Science">
        <title>The transcriptional landscape of the mammalian genome.</title>
        <authorList>
            <person name="Carninci P."/>
            <person name="Kasukawa T."/>
            <person name="Katayama S."/>
            <person name="Gough J."/>
            <person name="Frith M.C."/>
            <person name="Maeda N."/>
            <person name="Oyama R."/>
            <person name="Ravasi T."/>
            <person name="Lenhard B."/>
            <person name="Wells C."/>
            <person name="Kodzius R."/>
            <person name="Shimokawa K."/>
            <person name="Bajic V.B."/>
            <person name="Brenner S.E."/>
            <person name="Batalov S."/>
            <person name="Forrest A.R."/>
            <person name="Zavolan M."/>
            <person name="Davis M.J."/>
            <person name="Wilming L.G."/>
            <person name="Aidinis V."/>
            <person name="Allen J.E."/>
            <person name="Ambesi-Impiombato A."/>
            <person name="Apweiler R."/>
            <person name="Aturaliya R.N."/>
            <person name="Bailey T.L."/>
            <person name="Bansal M."/>
            <person name="Baxter L."/>
            <person name="Beisel K.W."/>
            <person name="Bersano T."/>
            <person name="Bono H."/>
            <person name="Chalk A.M."/>
            <person name="Chiu K.P."/>
            <person name="Choudhary V."/>
            <person name="Christoffels A."/>
            <person name="Clutterbuck D.R."/>
            <person name="Crowe M.L."/>
            <person name="Dalla E."/>
            <person name="Dalrymple B.P."/>
            <person name="de Bono B."/>
            <person name="Della Gatta G."/>
            <person name="di Bernardo D."/>
            <person name="Down T."/>
            <person name="Engstrom P."/>
            <person name="Fagiolini M."/>
            <person name="Faulkner G."/>
            <person name="Fletcher C.F."/>
            <person name="Fukushima T."/>
            <person name="Furuno M."/>
            <person name="Futaki S."/>
            <person name="Gariboldi M."/>
            <person name="Georgii-Hemming P."/>
            <person name="Gingeras T.R."/>
            <person name="Gojobori T."/>
            <person name="Green R.E."/>
            <person name="Gustincich S."/>
            <person name="Harbers M."/>
            <person name="Hayashi Y."/>
            <person name="Hensch T.K."/>
            <person name="Hirokawa N."/>
            <person name="Hill D."/>
            <person name="Huminiecki L."/>
            <person name="Iacono M."/>
            <person name="Ikeo K."/>
            <person name="Iwama A."/>
            <person name="Ishikawa T."/>
            <person name="Jakt M."/>
            <person name="Kanapin A."/>
            <person name="Katoh M."/>
            <person name="Kawasawa Y."/>
            <person name="Kelso J."/>
            <person name="Kitamura H."/>
            <person name="Kitano H."/>
            <person name="Kollias G."/>
            <person name="Krishnan S.P."/>
            <person name="Kruger A."/>
            <person name="Kummerfeld S.K."/>
            <person name="Kurochkin I.V."/>
            <person name="Lareau L.F."/>
            <person name="Lazarevic D."/>
            <person name="Lipovich L."/>
            <person name="Liu J."/>
            <person name="Liuni S."/>
            <person name="McWilliam S."/>
            <person name="Madan Babu M."/>
            <person name="Madera M."/>
            <person name="Marchionni L."/>
            <person name="Matsuda H."/>
            <person name="Matsuzawa S."/>
            <person name="Miki H."/>
            <person name="Mignone F."/>
            <person name="Miyake S."/>
            <person name="Morris K."/>
            <person name="Mottagui-Tabar S."/>
            <person name="Mulder N."/>
            <person name="Nakano N."/>
            <person name="Nakauchi H."/>
            <person name="Ng P."/>
            <person name="Nilsson R."/>
            <person name="Nishiguchi S."/>
            <person name="Nishikawa S."/>
            <person name="Nori F."/>
            <person name="Ohara O."/>
            <person name="Okazaki Y."/>
            <person name="Orlando V."/>
            <person name="Pang K.C."/>
            <person name="Pavan W.J."/>
            <person name="Pavesi G."/>
            <person name="Pesole G."/>
            <person name="Petrovsky N."/>
            <person name="Piazza S."/>
            <person name="Reed J."/>
            <person name="Reid J.F."/>
            <person name="Ring B.Z."/>
            <person name="Ringwald M."/>
            <person name="Rost B."/>
            <person name="Ruan Y."/>
            <person name="Salzberg S.L."/>
            <person name="Sandelin A."/>
            <person name="Schneider C."/>
            <person name="Schoenbach C."/>
            <person name="Sekiguchi K."/>
            <person name="Semple C.A."/>
            <person name="Seno S."/>
            <person name="Sessa L."/>
            <person name="Sheng Y."/>
            <person name="Shibata Y."/>
            <person name="Shimada H."/>
            <person name="Shimada K."/>
            <person name="Silva D."/>
            <person name="Sinclair B."/>
            <person name="Sperling S."/>
            <person name="Stupka E."/>
            <person name="Sugiura K."/>
            <person name="Sultana R."/>
            <person name="Takenaka Y."/>
            <person name="Taki K."/>
            <person name="Tammoja K."/>
            <person name="Tan S.L."/>
            <person name="Tang S."/>
            <person name="Taylor M.S."/>
            <person name="Tegner J."/>
            <person name="Teichmann S.A."/>
            <person name="Ueda H.R."/>
            <person name="van Nimwegen E."/>
            <person name="Verardo R."/>
            <person name="Wei C.L."/>
            <person name="Yagi K."/>
            <person name="Yamanishi H."/>
            <person name="Zabarovsky E."/>
            <person name="Zhu S."/>
            <person name="Zimmer A."/>
            <person name="Hide W."/>
            <person name="Bult C."/>
            <person name="Grimmond S.M."/>
            <person name="Teasdale R.D."/>
            <person name="Liu E.T."/>
            <person name="Brusic V."/>
            <person name="Quackenbush J."/>
            <person name="Wahlestedt C."/>
            <person name="Mattick J.S."/>
            <person name="Hume D.A."/>
            <person name="Kai C."/>
            <person name="Sasaki D."/>
            <person name="Tomaru Y."/>
            <person name="Fukuda S."/>
            <person name="Kanamori-Katayama M."/>
            <person name="Suzuki M."/>
            <person name="Aoki J."/>
            <person name="Arakawa T."/>
            <person name="Iida J."/>
            <person name="Imamura K."/>
            <person name="Itoh M."/>
            <person name="Kato T."/>
            <person name="Kawaji H."/>
            <person name="Kawagashira N."/>
            <person name="Kawashima T."/>
            <person name="Kojima M."/>
            <person name="Kondo S."/>
            <person name="Konno H."/>
            <person name="Nakano K."/>
            <person name="Ninomiya N."/>
            <person name="Nishio T."/>
            <person name="Okada M."/>
            <person name="Plessy C."/>
            <person name="Shibata K."/>
            <person name="Shiraki T."/>
            <person name="Suzuki S."/>
            <person name="Tagami M."/>
            <person name="Waki K."/>
            <person name="Watahiki A."/>
            <person name="Okamura-Oho Y."/>
            <person name="Suzuki H."/>
            <person name="Kawai J."/>
            <person name="Hayashizaki Y."/>
        </authorList>
    </citation>
    <scope>NUCLEOTIDE SEQUENCE [LARGE SCALE MRNA]</scope>
    <source>
        <strain>DBA/2J</strain>
    </source>
</reference>
<reference key="2">
    <citation type="journal article" date="2004" name="Genome Res.">
        <title>The status, quality, and expansion of the NIH full-length cDNA project: the Mammalian Gene Collection (MGC).</title>
        <authorList>
            <consortium name="The MGC Project Team"/>
        </authorList>
    </citation>
    <scope>NUCLEOTIDE SEQUENCE [LARGE SCALE MRNA]</scope>
    <source>
        <strain>Czech II</strain>
        <strain>FVB/N</strain>
        <tissue>Brain</tissue>
        <tissue>Mammary tumor</tissue>
    </source>
</reference>
<reference key="3">
    <citation type="journal article" date="2010" name="Cell">
        <title>A tissue-specific atlas of mouse protein phosphorylation and expression.</title>
        <authorList>
            <person name="Huttlin E.L."/>
            <person name="Jedrychowski M.P."/>
            <person name="Elias J.E."/>
            <person name="Goswami T."/>
            <person name="Rad R."/>
            <person name="Beausoleil S.A."/>
            <person name="Villen J."/>
            <person name="Haas W."/>
            <person name="Sowa M.E."/>
            <person name="Gygi S.P."/>
        </authorList>
    </citation>
    <scope>IDENTIFICATION BY MASS SPECTROMETRY [LARGE SCALE ANALYSIS]</scope>
    <source>
        <tissue>Brain</tissue>
        <tissue>Brown adipose tissue</tissue>
        <tissue>Heart</tissue>
        <tissue>Kidney</tissue>
        <tissue>Liver</tissue>
        <tissue>Spleen</tissue>
        <tissue>Testis</tissue>
    </source>
</reference>
<feature type="transit peptide" description="Mitochondrion" evidence="1">
    <location>
        <begin position="1"/>
        <end position="33"/>
    </location>
</feature>
<feature type="chain" id="PRO_0000319045" description="Mitochondrial intermediate peptidase">
    <location>
        <begin position="34"/>
        <end position="711"/>
    </location>
</feature>
<feature type="active site" evidence="3">
    <location>
        <position position="494"/>
    </location>
</feature>
<feature type="binding site" evidence="3">
    <location>
        <position position="493"/>
    </location>
    <ligand>
        <name>Zn(2+)</name>
        <dbReference type="ChEBI" id="CHEBI:29105"/>
        <note>catalytic</note>
    </ligand>
</feature>
<feature type="binding site" evidence="3">
    <location>
        <position position="497"/>
    </location>
    <ligand>
        <name>Zn(2+)</name>
        <dbReference type="ChEBI" id="CHEBI:29105"/>
        <note>catalytic</note>
    </ligand>
</feature>
<feature type="binding site" evidence="3">
    <location>
        <position position="500"/>
    </location>
    <ligand>
        <name>Zn(2+)</name>
        <dbReference type="ChEBI" id="CHEBI:29105"/>
        <note>catalytic</note>
    </ligand>
</feature>
<feature type="modified residue" description="N6-acetyllysine" evidence="2">
    <location>
        <position position="124"/>
    </location>
</feature>
<feature type="sequence conflict" description="In Ref. 1; BAE27162." evidence="4" ref="1">
    <original>R</original>
    <variation>RVP</variation>
    <location>
        <position position="61"/>
    </location>
</feature>
<feature type="sequence conflict" description="In Ref. 1; BAE27162." evidence="4" ref="1">
    <original>S</original>
    <variation>N</variation>
    <location>
        <position position="286"/>
    </location>
</feature>
<feature type="sequence conflict" description="In Ref. 1; BAE27162." evidence="4" ref="1">
    <original>A</original>
    <variation>T</variation>
    <location>
        <position position="419"/>
    </location>
</feature>
<feature type="sequence conflict" description="In Ref. 2; AAI10359." evidence="4" ref="2">
    <original>Y</original>
    <variation>H</variation>
    <location>
        <position position="508"/>
    </location>
</feature>
<feature type="sequence conflict" description="In Ref. 1; BAE27162." evidence="4" ref="1">
    <original>T</original>
    <variation>A</variation>
    <location>
        <position position="595"/>
    </location>
</feature>